<proteinExistence type="inferred from homology"/>
<dbReference type="EC" id="1.1.1.37" evidence="1"/>
<dbReference type="EMBL" id="CP001349">
    <property type="protein sequence ID" value="ACL56129.1"/>
    <property type="molecule type" value="Genomic_DNA"/>
</dbReference>
<dbReference type="RefSeq" id="WP_015927827.1">
    <property type="nucleotide sequence ID" value="NC_011894.1"/>
</dbReference>
<dbReference type="SMR" id="B8IJB4"/>
<dbReference type="STRING" id="460265.Mnod_1123"/>
<dbReference type="KEGG" id="mno:Mnod_1123"/>
<dbReference type="eggNOG" id="COG0039">
    <property type="taxonomic scope" value="Bacteria"/>
</dbReference>
<dbReference type="HOGENOM" id="CLU_045401_2_1_5"/>
<dbReference type="OrthoDB" id="9802969at2"/>
<dbReference type="Proteomes" id="UP000008207">
    <property type="component" value="Chromosome"/>
</dbReference>
<dbReference type="GO" id="GO:0004459">
    <property type="term" value="F:L-lactate dehydrogenase activity"/>
    <property type="evidence" value="ECO:0007669"/>
    <property type="project" value="TreeGrafter"/>
</dbReference>
<dbReference type="GO" id="GO:0030060">
    <property type="term" value="F:L-malate dehydrogenase (NAD+) activity"/>
    <property type="evidence" value="ECO:0007669"/>
    <property type="project" value="UniProtKB-UniRule"/>
</dbReference>
<dbReference type="GO" id="GO:0006089">
    <property type="term" value="P:lactate metabolic process"/>
    <property type="evidence" value="ECO:0007669"/>
    <property type="project" value="TreeGrafter"/>
</dbReference>
<dbReference type="GO" id="GO:0006099">
    <property type="term" value="P:tricarboxylic acid cycle"/>
    <property type="evidence" value="ECO:0007669"/>
    <property type="project" value="UniProtKB-UniRule"/>
</dbReference>
<dbReference type="CDD" id="cd01339">
    <property type="entry name" value="LDH-like_MDH"/>
    <property type="match status" value="1"/>
</dbReference>
<dbReference type="FunFam" id="3.40.50.720:FF:000018">
    <property type="entry name" value="Malate dehydrogenase"/>
    <property type="match status" value="1"/>
</dbReference>
<dbReference type="FunFam" id="3.90.110.10:FF:000004">
    <property type="entry name" value="Malate dehydrogenase"/>
    <property type="match status" value="1"/>
</dbReference>
<dbReference type="Gene3D" id="3.90.110.10">
    <property type="entry name" value="Lactate dehydrogenase/glycoside hydrolase, family 4, C-terminal"/>
    <property type="match status" value="1"/>
</dbReference>
<dbReference type="Gene3D" id="3.40.50.720">
    <property type="entry name" value="NAD(P)-binding Rossmann-like Domain"/>
    <property type="match status" value="1"/>
</dbReference>
<dbReference type="HAMAP" id="MF_00487">
    <property type="entry name" value="Malate_dehydrog_3"/>
    <property type="match status" value="1"/>
</dbReference>
<dbReference type="InterPro" id="IPR001557">
    <property type="entry name" value="L-lactate/malate_DH"/>
</dbReference>
<dbReference type="InterPro" id="IPR022383">
    <property type="entry name" value="Lactate/malate_DH_C"/>
</dbReference>
<dbReference type="InterPro" id="IPR001236">
    <property type="entry name" value="Lactate/malate_DH_N"/>
</dbReference>
<dbReference type="InterPro" id="IPR015955">
    <property type="entry name" value="Lactate_DH/Glyco_Ohase_4_C"/>
</dbReference>
<dbReference type="InterPro" id="IPR011275">
    <property type="entry name" value="Malate_DH_type3"/>
</dbReference>
<dbReference type="InterPro" id="IPR036291">
    <property type="entry name" value="NAD(P)-bd_dom_sf"/>
</dbReference>
<dbReference type="NCBIfam" id="TIGR01763">
    <property type="entry name" value="MalateDH_bact"/>
    <property type="match status" value="1"/>
</dbReference>
<dbReference type="NCBIfam" id="NF004863">
    <property type="entry name" value="PRK06223.1"/>
    <property type="match status" value="1"/>
</dbReference>
<dbReference type="PANTHER" id="PTHR43128">
    <property type="entry name" value="L-2-HYDROXYCARBOXYLATE DEHYDROGENASE (NAD(P)(+))"/>
    <property type="match status" value="1"/>
</dbReference>
<dbReference type="PANTHER" id="PTHR43128:SF16">
    <property type="entry name" value="L-LACTATE DEHYDROGENASE"/>
    <property type="match status" value="1"/>
</dbReference>
<dbReference type="Pfam" id="PF02866">
    <property type="entry name" value="Ldh_1_C"/>
    <property type="match status" value="1"/>
</dbReference>
<dbReference type="Pfam" id="PF00056">
    <property type="entry name" value="Ldh_1_N"/>
    <property type="match status" value="1"/>
</dbReference>
<dbReference type="PIRSF" id="PIRSF000102">
    <property type="entry name" value="Lac_mal_DH"/>
    <property type="match status" value="1"/>
</dbReference>
<dbReference type="PRINTS" id="PR00086">
    <property type="entry name" value="LLDHDRGNASE"/>
</dbReference>
<dbReference type="SUPFAM" id="SSF56327">
    <property type="entry name" value="LDH C-terminal domain-like"/>
    <property type="match status" value="1"/>
</dbReference>
<dbReference type="SUPFAM" id="SSF51735">
    <property type="entry name" value="NAD(P)-binding Rossmann-fold domains"/>
    <property type="match status" value="1"/>
</dbReference>
<feature type="chain" id="PRO_1000191650" description="Malate dehydrogenase">
    <location>
        <begin position="1"/>
        <end position="320"/>
    </location>
</feature>
<feature type="active site" description="Proton acceptor" evidence="1">
    <location>
        <position position="176"/>
    </location>
</feature>
<feature type="binding site" evidence="1">
    <location>
        <begin position="10"/>
        <end position="15"/>
    </location>
    <ligand>
        <name>NAD(+)</name>
        <dbReference type="ChEBI" id="CHEBI:57540"/>
    </ligand>
</feature>
<feature type="binding site" evidence="1">
    <location>
        <position position="34"/>
    </location>
    <ligand>
        <name>NAD(+)</name>
        <dbReference type="ChEBI" id="CHEBI:57540"/>
    </ligand>
</feature>
<feature type="binding site" evidence="1">
    <location>
        <position position="83"/>
    </location>
    <ligand>
        <name>substrate</name>
    </ligand>
</feature>
<feature type="binding site" evidence="1">
    <location>
        <position position="89"/>
    </location>
    <ligand>
        <name>substrate</name>
    </ligand>
</feature>
<feature type="binding site" evidence="1">
    <location>
        <position position="96"/>
    </location>
    <ligand>
        <name>NAD(+)</name>
        <dbReference type="ChEBI" id="CHEBI:57540"/>
    </ligand>
</feature>
<feature type="binding site" evidence="1">
    <location>
        <begin position="119"/>
        <end position="121"/>
    </location>
    <ligand>
        <name>NAD(+)</name>
        <dbReference type="ChEBI" id="CHEBI:57540"/>
    </ligand>
</feature>
<feature type="binding site" evidence="1">
    <location>
        <position position="121"/>
    </location>
    <ligand>
        <name>substrate</name>
    </ligand>
</feature>
<feature type="binding site" evidence="1">
    <location>
        <position position="152"/>
    </location>
    <ligand>
        <name>substrate</name>
    </ligand>
</feature>
<protein>
    <recommendedName>
        <fullName evidence="1">Malate dehydrogenase</fullName>
        <ecNumber evidence="1">1.1.1.37</ecNumber>
    </recommendedName>
</protein>
<reference key="1">
    <citation type="submission" date="2009-01" db="EMBL/GenBank/DDBJ databases">
        <title>Complete sequence of chromosome of Methylobacterium nodulans ORS 2060.</title>
        <authorList>
            <consortium name="US DOE Joint Genome Institute"/>
            <person name="Lucas S."/>
            <person name="Copeland A."/>
            <person name="Lapidus A."/>
            <person name="Glavina del Rio T."/>
            <person name="Dalin E."/>
            <person name="Tice H."/>
            <person name="Bruce D."/>
            <person name="Goodwin L."/>
            <person name="Pitluck S."/>
            <person name="Sims D."/>
            <person name="Brettin T."/>
            <person name="Detter J.C."/>
            <person name="Han C."/>
            <person name="Larimer F."/>
            <person name="Land M."/>
            <person name="Hauser L."/>
            <person name="Kyrpides N."/>
            <person name="Ivanova N."/>
            <person name="Marx C.J."/>
            <person name="Richardson P."/>
        </authorList>
    </citation>
    <scope>NUCLEOTIDE SEQUENCE [LARGE SCALE GENOMIC DNA]</scope>
    <source>
        <strain>LMG 21967 / CNCM I-2342 / ORS 2060</strain>
    </source>
</reference>
<gene>
    <name evidence="1" type="primary">mdh</name>
    <name type="ordered locus">Mnod_1123</name>
</gene>
<accession>B8IJB4</accession>
<sequence>MARKKIALIGAGQIGGTLAHLAGLKELGDVVLFDIADGVPQGKGLDIAESAPVDGFDAKYSGASDYSAIAGADVVIVTAGVPRKPGMSRDDLIGINLKVMEAVGTGIKTHAPNAFVICITNPLDAMVWALQKFSGLDPKKIVGMAGVLDSARFRHFLAEEFSVSVEDVTAFVLGGHGDDMVPLVRYSTVAGIPLPDLVKMGWTTQEKLDAMVERTRKGGGEIVNLLKTGSAFYAPAASAIAMAESYLKDKKRVLPCAAYLTGQYGVDGLFIGVPIVIGENGVERIVEVAFSAEEKAMFDKSVNSVKGLVEACKGINAALA</sequence>
<comment type="function">
    <text evidence="1">Catalyzes the reversible oxidation of malate to oxaloacetate.</text>
</comment>
<comment type="catalytic activity">
    <reaction evidence="1">
        <text>(S)-malate + NAD(+) = oxaloacetate + NADH + H(+)</text>
        <dbReference type="Rhea" id="RHEA:21432"/>
        <dbReference type="ChEBI" id="CHEBI:15378"/>
        <dbReference type="ChEBI" id="CHEBI:15589"/>
        <dbReference type="ChEBI" id="CHEBI:16452"/>
        <dbReference type="ChEBI" id="CHEBI:57540"/>
        <dbReference type="ChEBI" id="CHEBI:57945"/>
        <dbReference type="EC" id="1.1.1.37"/>
    </reaction>
</comment>
<comment type="similarity">
    <text evidence="1">Belongs to the LDH/MDH superfamily. MDH type 3 family.</text>
</comment>
<evidence type="ECO:0000255" key="1">
    <source>
        <dbReference type="HAMAP-Rule" id="MF_00487"/>
    </source>
</evidence>
<organism>
    <name type="scientific">Methylobacterium nodulans (strain LMG 21967 / CNCM I-2342 / ORS 2060)</name>
    <dbReference type="NCBI Taxonomy" id="460265"/>
    <lineage>
        <taxon>Bacteria</taxon>
        <taxon>Pseudomonadati</taxon>
        <taxon>Pseudomonadota</taxon>
        <taxon>Alphaproteobacteria</taxon>
        <taxon>Hyphomicrobiales</taxon>
        <taxon>Methylobacteriaceae</taxon>
        <taxon>Methylobacterium</taxon>
    </lineage>
</organism>
<name>MDH_METNO</name>
<keyword id="KW-0520">NAD</keyword>
<keyword id="KW-0560">Oxidoreductase</keyword>
<keyword id="KW-1185">Reference proteome</keyword>
<keyword id="KW-0816">Tricarboxylic acid cycle</keyword>